<proteinExistence type="evidence at transcript level"/>
<comment type="function">
    <text evidence="2">Involved in resistance to ethambutol and isoniazid.</text>
</comment>
<comment type="activity regulation">
    <text evidence="2">Efflux activity is inhibited by carbonyl cyanide m-chlorophenylhydrazone (CCCP) and verapamil.</text>
</comment>
<comment type="subcellular location">
    <subcellularLocation>
        <location evidence="4">Cell inner membrane</location>
        <topology evidence="1">Multi-pass membrane protein</topology>
    </subcellularLocation>
</comment>
<comment type="induction">
    <text evidence="2">Induced in the presence of ethambutol or isoniazid.</text>
</comment>
<comment type="similarity">
    <text evidence="4">Belongs to the major facilitator superfamily.</text>
</comment>
<accession>P9WJW9</accession>
<accession>L0TCL0</accession>
<accession>O53186</accession>
<accession>Q7D739</accession>
<protein>
    <recommendedName>
        <fullName evidence="4">Drug efflux pump JefA</fullName>
    </recommendedName>
</protein>
<evidence type="ECO:0000255" key="1"/>
<evidence type="ECO:0000269" key="2">
    <source>
    </source>
</evidence>
<evidence type="ECO:0000303" key="3">
    <source>
    </source>
</evidence>
<evidence type="ECO:0000305" key="4"/>
<evidence type="ECO:0000312" key="5">
    <source>
        <dbReference type="EMBL" id="CCP45252.1"/>
    </source>
</evidence>
<dbReference type="EMBL" id="AL123456">
    <property type="protein sequence ID" value="CCP45252.1"/>
    <property type="molecule type" value="Genomic_DNA"/>
</dbReference>
<dbReference type="PIR" id="B70865">
    <property type="entry name" value="B70865"/>
</dbReference>
<dbReference type="RefSeq" id="NP_216975.1">
    <property type="nucleotide sequence ID" value="NC_000962.3"/>
</dbReference>
<dbReference type="RefSeq" id="WP_003412642.1">
    <property type="nucleotide sequence ID" value="NZ_NVQJ01000024.1"/>
</dbReference>
<dbReference type="SMR" id="P9WJW9"/>
<dbReference type="FunCoup" id="P9WJW9">
    <property type="interactions" value="40"/>
</dbReference>
<dbReference type="STRING" id="83332.Rv2459"/>
<dbReference type="PaxDb" id="83332-Rv2459"/>
<dbReference type="GeneID" id="45426449"/>
<dbReference type="GeneID" id="888191"/>
<dbReference type="KEGG" id="mtu:Rv2459"/>
<dbReference type="KEGG" id="mtv:RVBD_2459"/>
<dbReference type="TubercuList" id="Rv2459"/>
<dbReference type="eggNOG" id="COG0477">
    <property type="taxonomic scope" value="Bacteria"/>
</dbReference>
<dbReference type="InParanoid" id="P9WJW9"/>
<dbReference type="OrthoDB" id="9781469at2"/>
<dbReference type="PhylomeDB" id="P9WJW9"/>
<dbReference type="Proteomes" id="UP000001584">
    <property type="component" value="Chromosome"/>
</dbReference>
<dbReference type="GO" id="GO:0016020">
    <property type="term" value="C:membrane"/>
    <property type="evidence" value="ECO:0000318"/>
    <property type="project" value="GO_Central"/>
</dbReference>
<dbReference type="GO" id="GO:0005886">
    <property type="term" value="C:plasma membrane"/>
    <property type="evidence" value="ECO:0007669"/>
    <property type="project" value="UniProtKB-SubCell"/>
</dbReference>
<dbReference type="GO" id="GO:0022857">
    <property type="term" value="F:transmembrane transporter activity"/>
    <property type="evidence" value="ECO:0007669"/>
    <property type="project" value="InterPro"/>
</dbReference>
<dbReference type="GO" id="GO:0046677">
    <property type="term" value="P:response to antibiotic"/>
    <property type="evidence" value="ECO:0007669"/>
    <property type="project" value="UniProtKB-KW"/>
</dbReference>
<dbReference type="CDD" id="cd17321">
    <property type="entry name" value="MFS_MMR_MDR_like"/>
    <property type="match status" value="1"/>
</dbReference>
<dbReference type="Gene3D" id="1.20.1250.20">
    <property type="entry name" value="MFS general substrate transporter like domains"/>
    <property type="match status" value="1"/>
</dbReference>
<dbReference type="Gene3D" id="1.20.1720.10">
    <property type="entry name" value="Multidrug resistance protein D"/>
    <property type="match status" value="1"/>
</dbReference>
<dbReference type="InterPro" id="IPR011701">
    <property type="entry name" value="MFS"/>
</dbReference>
<dbReference type="InterPro" id="IPR020846">
    <property type="entry name" value="MFS_dom"/>
</dbReference>
<dbReference type="InterPro" id="IPR036259">
    <property type="entry name" value="MFS_trans_sf"/>
</dbReference>
<dbReference type="PANTHER" id="PTHR42718">
    <property type="entry name" value="MAJOR FACILITATOR SUPERFAMILY MULTIDRUG TRANSPORTER MFSC"/>
    <property type="match status" value="1"/>
</dbReference>
<dbReference type="PANTHER" id="PTHR42718:SF9">
    <property type="entry name" value="MAJOR FACILITATOR SUPERFAMILY MULTIDRUG TRANSPORTER MFSC"/>
    <property type="match status" value="1"/>
</dbReference>
<dbReference type="Pfam" id="PF07690">
    <property type="entry name" value="MFS_1"/>
    <property type="match status" value="1"/>
</dbReference>
<dbReference type="SUPFAM" id="SSF103473">
    <property type="entry name" value="MFS general substrate transporter"/>
    <property type="match status" value="1"/>
</dbReference>
<dbReference type="PROSITE" id="PS50850">
    <property type="entry name" value="MFS"/>
    <property type="match status" value="1"/>
</dbReference>
<reference key="1">
    <citation type="journal article" date="1998" name="Nature">
        <title>Deciphering the biology of Mycobacterium tuberculosis from the complete genome sequence.</title>
        <authorList>
            <person name="Cole S.T."/>
            <person name="Brosch R."/>
            <person name="Parkhill J."/>
            <person name="Garnier T."/>
            <person name="Churcher C.M."/>
            <person name="Harris D.E."/>
            <person name="Gordon S.V."/>
            <person name="Eiglmeier K."/>
            <person name="Gas S."/>
            <person name="Barry C.E. III"/>
            <person name="Tekaia F."/>
            <person name="Badcock K."/>
            <person name="Basham D."/>
            <person name="Brown D."/>
            <person name="Chillingworth T."/>
            <person name="Connor R."/>
            <person name="Davies R.M."/>
            <person name="Devlin K."/>
            <person name="Feltwell T."/>
            <person name="Gentles S."/>
            <person name="Hamlin N."/>
            <person name="Holroyd S."/>
            <person name="Hornsby T."/>
            <person name="Jagels K."/>
            <person name="Krogh A."/>
            <person name="McLean J."/>
            <person name="Moule S."/>
            <person name="Murphy L.D."/>
            <person name="Oliver S."/>
            <person name="Osborne J."/>
            <person name="Quail M.A."/>
            <person name="Rajandream M.A."/>
            <person name="Rogers J."/>
            <person name="Rutter S."/>
            <person name="Seeger K."/>
            <person name="Skelton S."/>
            <person name="Squares S."/>
            <person name="Squares R."/>
            <person name="Sulston J.E."/>
            <person name="Taylor K."/>
            <person name="Whitehead S."/>
            <person name="Barrell B.G."/>
        </authorList>
    </citation>
    <scope>NUCLEOTIDE SEQUENCE [LARGE SCALE GENOMIC DNA]</scope>
    <source>
        <strain>ATCC 25618 / H37Rv</strain>
    </source>
</reference>
<reference key="2">
    <citation type="journal article" date="2010" name="Indian J. Med. Res.">
        <title>jefA (Rv2459), a drug efflux gene in Mycobacterium tuberculosis confers resistance to isoniazid &amp; ethambutol.</title>
        <authorList>
            <person name="Gupta A.K."/>
            <person name="Reddy V.P."/>
            <person name="Lavania M."/>
            <person name="Chauhan D.S."/>
            <person name="Venkatesan K."/>
            <person name="Sharma V.D."/>
            <person name="Tyagi A.K."/>
            <person name="Katoch V.M."/>
        </authorList>
    </citation>
    <scope>FUNCTION</scope>
    <scope>ACTIVITY REGULATION</scope>
    <scope>INDUCTION</scope>
    <source>
        <strain>ATCC 27294 / TMC 102 / H37Rv</strain>
    </source>
</reference>
<feature type="chain" id="PRO_0000390685" description="Drug efflux pump JefA">
    <location>
        <begin position="1"/>
        <end position="508"/>
    </location>
</feature>
<feature type="transmembrane region" description="Helical" evidence="1">
    <location>
        <begin position="9"/>
        <end position="29"/>
    </location>
</feature>
<feature type="transmembrane region" description="Helical" evidence="1">
    <location>
        <begin position="46"/>
        <end position="66"/>
    </location>
</feature>
<feature type="transmembrane region" description="Helical" evidence="1">
    <location>
        <begin position="75"/>
        <end position="95"/>
    </location>
</feature>
<feature type="transmembrane region" description="Helical" evidence="1">
    <location>
        <begin position="104"/>
        <end position="124"/>
    </location>
</feature>
<feature type="transmembrane region" description="Helical" evidence="1">
    <location>
        <begin position="136"/>
        <end position="156"/>
    </location>
</feature>
<feature type="transmembrane region" description="Helical" evidence="1">
    <location>
        <begin position="163"/>
        <end position="183"/>
    </location>
</feature>
<feature type="transmembrane region" description="Helical" evidence="1">
    <location>
        <begin position="194"/>
        <end position="214"/>
    </location>
</feature>
<feature type="transmembrane region" description="Helical" evidence="1">
    <location>
        <begin position="222"/>
        <end position="242"/>
    </location>
</feature>
<feature type="transmembrane region" description="Helical" evidence="1">
    <location>
        <begin position="265"/>
        <end position="285"/>
    </location>
</feature>
<feature type="transmembrane region" description="Helical" evidence="1">
    <location>
        <begin position="297"/>
        <end position="317"/>
    </location>
</feature>
<feature type="transmembrane region" description="Helical" evidence="1">
    <location>
        <begin position="328"/>
        <end position="348"/>
    </location>
</feature>
<feature type="transmembrane region" description="Helical" evidence="1">
    <location>
        <begin position="354"/>
        <end position="374"/>
    </location>
</feature>
<feature type="transmembrane region" description="Helical" evidence="1">
    <location>
        <begin position="399"/>
        <end position="419"/>
    </location>
</feature>
<feature type="transmembrane region" description="Helical" evidence="1">
    <location>
        <begin position="479"/>
        <end position="499"/>
    </location>
</feature>
<sequence length="508" mass="53479">MTPRQRLTVLATGLGIFMVFVDVNIVNVALPSIQKVFHTGEQGLQWAVAGYSLGMAAVLMSCALLGDRYGRRRSFVFGVTLFVVSSIVCVLPVSLAVFTVARVIQGLGAAFISVLSLALLSHSFPNPRMKARAISNWMAIGMVGAASAPALGGLMVDGLGWRSVFLVNVPLGAIVWLLTLVGVDESQDPEPTQLDWVGQLTLIPAVALIAYTIIEAPRFDRQSAGFVAALLLAAGVLLWLFVRHEHRAAFPLVDLKLFAEPLYRSVLIVYFVVMSCFFGTLMVITQHFQNVRDLSPLHAGLMMLPVPAGFGVASLLAGRAVNKWGPQLPVLTCLAAMFIGLAIFAISMDHAHPVALVGLTIFGAGAGGCATPLLHLGMTKVDDGRAGMAAGMLNLQRSLGGIFGVAFLGTIVAAWLGAALPNTMADEIPDPIARAIVVDVIVDSANPHAHAAFIGPGHRITAAQEDEIVLAADAVFVSGIKLALGGAAVLLTGAFVLGWTRFPRTPAS</sequence>
<keyword id="KW-0046">Antibiotic resistance</keyword>
<keyword id="KW-0997">Cell inner membrane</keyword>
<keyword id="KW-1003">Cell membrane</keyword>
<keyword id="KW-0472">Membrane</keyword>
<keyword id="KW-1185">Reference proteome</keyword>
<keyword id="KW-0812">Transmembrane</keyword>
<keyword id="KW-1133">Transmembrane helix</keyword>
<keyword id="KW-0813">Transport</keyword>
<organism>
    <name type="scientific">Mycobacterium tuberculosis (strain ATCC 25618 / H37Rv)</name>
    <dbReference type="NCBI Taxonomy" id="83332"/>
    <lineage>
        <taxon>Bacteria</taxon>
        <taxon>Bacillati</taxon>
        <taxon>Actinomycetota</taxon>
        <taxon>Actinomycetes</taxon>
        <taxon>Mycobacteriales</taxon>
        <taxon>Mycobacteriaceae</taxon>
        <taxon>Mycobacterium</taxon>
        <taxon>Mycobacterium tuberculosis complex</taxon>
    </lineage>
</organism>
<gene>
    <name evidence="3" type="primary">jefA</name>
    <name evidence="5" type="ordered locus">Rv2459</name>
</gene>
<name>JEFA_MYCTU</name>